<comment type="function">
    <text evidence="1">F(1)F(0) ATP synthase produces ATP from ADP in the presence of a proton or sodium gradient. F-type ATPases consist of two structural domains, F(1) containing the extramembraneous catalytic core and F(0) containing the membrane proton channel, linked together by a central stalk and a peripheral stalk. During catalysis, ATP synthesis in the catalytic domain of F(1) is coupled via a rotary mechanism of the central stalk subunits to proton translocation.</text>
</comment>
<comment type="function">
    <text evidence="1">Key component of the F(0) channel; it plays a direct role in translocation across the membrane. A homomeric c-ring of between 10-14 subunits forms the central stalk rotor element with the F(1) delta and epsilon subunits.</text>
</comment>
<comment type="subunit">
    <text evidence="1">F-type ATPases have 2 components, F(1) - the catalytic core - and F(0) - the membrane proton channel. F(1) has five subunits: alpha(3), beta(3), gamma(1), delta(1), epsilon(1). F(0) has three main subunits: a(1), b(2) and c(10-14). The alpha and beta chains form an alternating ring which encloses part of the gamma chain. F(1) is attached to F(0) by a central stalk formed by the gamma and epsilon chains, while a peripheral stalk is formed by the delta and b chains.</text>
</comment>
<comment type="subcellular location">
    <subcellularLocation>
        <location evidence="1">Cell membrane</location>
        <topology evidence="1">Multi-pass membrane protein</topology>
    </subcellularLocation>
</comment>
<comment type="similarity">
    <text evidence="1">Belongs to the ATPase C chain family.</text>
</comment>
<sequence length="76" mass="7633">MSQTLAAVEGSLGSIGYGLAAIGPGVGVGIIFGNGTQAMARQPEAAGLIRANQILGFAFCEALALIGLVMPFVYGY</sequence>
<feature type="chain" id="PRO_0000112166" description="ATP synthase subunit c">
    <location>
        <begin position="1"/>
        <end position="76"/>
    </location>
</feature>
<feature type="transmembrane region" description="Helical" evidence="1">
    <location>
        <begin position="12"/>
        <end position="32"/>
    </location>
</feature>
<feature type="transmembrane region" description="Helical" evidence="1">
    <location>
        <begin position="54"/>
        <end position="74"/>
    </location>
</feature>
<feature type="site" description="Reversibly protonated during proton transport" evidence="1">
    <location>
        <position position="61"/>
    </location>
</feature>
<name>ATPL_STRLI</name>
<accession>P0A305</accession>
<accession>P50014</accession>
<evidence type="ECO:0000255" key="1">
    <source>
        <dbReference type="HAMAP-Rule" id="MF_01396"/>
    </source>
</evidence>
<protein>
    <recommendedName>
        <fullName evidence="1">ATP synthase subunit c</fullName>
    </recommendedName>
    <alternativeName>
        <fullName evidence="1">ATP synthase F(0) sector subunit c</fullName>
    </alternativeName>
    <alternativeName>
        <fullName evidence="1">F-type ATPase subunit c</fullName>
        <shortName evidence="1">F-ATPase subunit c</shortName>
    </alternativeName>
    <alternativeName>
        <fullName evidence="1">Lipid-binding protein</fullName>
    </alternativeName>
</protein>
<organism>
    <name type="scientific">Streptomyces lividans</name>
    <dbReference type="NCBI Taxonomy" id="1916"/>
    <lineage>
        <taxon>Bacteria</taxon>
        <taxon>Bacillati</taxon>
        <taxon>Actinomycetota</taxon>
        <taxon>Actinomycetes</taxon>
        <taxon>Kitasatosporales</taxon>
        <taxon>Streptomycetaceae</taxon>
        <taxon>Streptomyces</taxon>
    </lineage>
</organism>
<keyword id="KW-0066">ATP synthesis</keyword>
<keyword id="KW-1003">Cell membrane</keyword>
<keyword id="KW-0138">CF(0)</keyword>
<keyword id="KW-0375">Hydrogen ion transport</keyword>
<keyword id="KW-0406">Ion transport</keyword>
<keyword id="KW-0446">Lipid-binding</keyword>
<keyword id="KW-0472">Membrane</keyword>
<keyword id="KW-0812">Transmembrane</keyword>
<keyword id="KW-1133">Transmembrane helix</keyword>
<keyword id="KW-0813">Transport</keyword>
<reference key="1">
    <citation type="journal article" date="1995" name="Gene">
        <title>The ATP synthase (F1F0) of Streptomyces lividans: sequencing of the atp operon and phylogenetic considerations with subunit beta.</title>
        <authorList>
            <person name="Hensel M."/>
            <person name="Lill H."/>
            <person name="Schmid R."/>
            <person name="Deckers-Hebestreit G."/>
            <person name="Altendorf K."/>
        </authorList>
    </citation>
    <scope>NUCLEOTIDE SEQUENCE [GENOMIC DNA]</scope>
    <source>
        <strain>66 / 1326</strain>
    </source>
</reference>
<dbReference type="EMBL" id="Z22606">
    <property type="protein sequence ID" value="CAA80322.1"/>
    <property type="molecule type" value="Genomic_DNA"/>
</dbReference>
<dbReference type="PIR" id="S37542">
    <property type="entry name" value="S37542"/>
</dbReference>
<dbReference type="SMR" id="P0A305"/>
<dbReference type="GO" id="GO:0005886">
    <property type="term" value="C:plasma membrane"/>
    <property type="evidence" value="ECO:0007669"/>
    <property type="project" value="UniProtKB-SubCell"/>
</dbReference>
<dbReference type="GO" id="GO:0045259">
    <property type="term" value="C:proton-transporting ATP synthase complex"/>
    <property type="evidence" value="ECO:0007669"/>
    <property type="project" value="UniProtKB-KW"/>
</dbReference>
<dbReference type="GO" id="GO:0033177">
    <property type="term" value="C:proton-transporting two-sector ATPase complex, proton-transporting domain"/>
    <property type="evidence" value="ECO:0007669"/>
    <property type="project" value="InterPro"/>
</dbReference>
<dbReference type="GO" id="GO:0008289">
    <property type="term" value="F:lipid binding"/>
    <property type="evidence" value="ECO:0007669"/>
    <property type="project" value="UniProtKB-KW"/>
</dbReference>
<dbReference type="GO" id="GO:0046933">
    <property type="term" value="F:proton-transporting ATP synthase activity, rotational mechanism"/>
    <property type="evidence" value="ECO:0007669"/>
    <property type="project" value="UniProtKB-UniRule"/>
</dbReference>
<dbReference type="CDD" id="cd18121">
    <property type="entry name" value="ATP-synt_Fo_c"/>
    <property type="match status" value="1"/>
</dbReference>
<dbReference type="FunFam" id="1.20.20.10:FF:000015">
    <property type="entry name" value="ATP synthase subunit c"/>
    <property type="match status" value="1"/>
</dbReference>
<dbReference type="Gene3D" id="1.20.20.10">
    <property type="entry name" value="F1F0 ATP synthase subunit C"/>
    <property type="match status" value="1"/>
</dbReference>
<dbReference type="HAMAP" id="MF_01396">
    <property type="entry name" value="ATP_synth_c_bact"/>
    <property type="match status" value="1"/>
</dbReference>
<dbReference type="InterPro" id="IPR005953">
    <property type="entry name" value="ATP_synth_csu_bac/chlpt"/>
</dbReference>
<dbReference type="InterPro" id="IPR000454">
    <property type="entry name" value="ATP_synth_F0_csu"/>
</dbReference>
<dbReference type="InterPro" id="IPR020537">
    <property type="entry name" value="ATP_synth_F0_csu_DDCD_BS"/>
</dbReference>
<dbReference type="InterPro" id="IPR038662">
    <property type="entry name" value="ATP_synth_F0_csu_sf"/>
</dbReference>
<dbReference type="InterPro" id="IPR002379">
    <property type="entry name" value="ATPase_proteolipid_c-like_dom"/>
</dbReference>
<dbReference type="InterPro" id="IPR035921">
    <property type="entry name" value="F/V-ATP_Csub_sf"/>
</dbReference>
<dbReference type="NCBIfam" id="TIGR01260">
    <property type="entry name" value="ATP_synt_c"/>
    <property type="match status" value="1"/>
</dbReference>
<dbReference type="PANTHER" id="PTHR10031">
    <property type="entry name" value="ATP SYNTHASE LIPID-BINDING PROTEIN, MITOCHONDRIAL"/>
    <property type="match status" value="1"/>
</dbReference>
<dbReference type="PANTHER" id="PTHR10031:SF0">
    <property type="entry name" value="ATPASE PROTEIN 9"/>
    <property type="match status" value="1"/>
</dbReference>
<dbReference type="Pfam" id="PF00137">
    <property type="entry name" value="ATP-synt_C"/>
    <property type="match status" value="1"/>
</dbReference>
<dbReference type="PRINTS" id="PR00124">
    <property type="entry name" value="ATPASEC"/>
</dbReference>
<dbReference type="SUPFAM" id="SSF81333">
    <property type="entry name" value="F1F0 ATP synthase subunit C"/>
    <property type="match status" value="1"/>
</dbReference>
<dbReference type="PROSITE" id="PS00605">
    <property type="entry name" value="ATPASE_C"/>
    <property type="match status" value="1"/>
</dbReference>
<proteinExistence type="inferred from homology"/>
<gene>
    <name evidence="1" type="primary">atpE</name>
</gene>